<reference key="1">
    <citation type="journal article" date="2001" name="Science">
        <title>Complete genome sequence of a virulent isolate of Streptococcus pneumoniae.</title>
        <authorList>
            <person name="Tettelin H."/>
            <person name="Nelson K.E."/>
            <person name="Paulsen I.T."/>
            <person name="Eisen J.A."/>
            <person name="Read T.D."/>
            <person name="Peterson S.N."/>
            <person name="Heidelberg J.F."/>
            <person name="DeBoy R.T."/>
            <person name="Haft D.H."/>
            <person name="Dodson R.J."/>
            <person name="Durkin A.S."/>
            <person name="Gwinn M.L."/>
            <person name="Kolonay J.F."/>
            <person name="Nelson W.C."/>
            <person name="Peterson J.D."/>
            <person name="Umayam L.A."/>
            <person name="White O."/>
            <person name="Salzberg S.L."/>
            <person name="Lewis M.R."/>
            <person name="Radune D."/>
            <person name="Holtzapple E.K."/>
            <person name="Khouri H.M."/>
            <person name="Wolf A.M."/>
            <person name="Utterback T.R."/>
            <person name="Hansen C.L."/>
            <person name="McDonald L.A."/>
            <person name="Feldblyum T.V."/>
            <person name="Angiuoli S.V."/>
            <person name="Dickinson T."/>
            <person name="Hickey E.K."/>
            <person name="Holt I.E."/>
            <person name="Loftus B.J."/>
            <person name="Yang F."/>
            <person name="Smith H.O."/>
            <person name="Venter J.C."/>
            <person name="Dougherty B.A."/>
            <person name="Morrison D.A."/>
            <person name="Hollingshead S.K."/>
            <person name="Fraser C.M."/>
        </authorList>
    </citation>
    <scope>NUCLEOTIDE SEQUENCE [LARGE SCALE GENOMIC DNA]</scope>
    <source>
        <strain>ATCC BAA-334 / TIGR4</strain>
    </source>
</reference>
<organism>
    <name type="scientific">Streptococcus pneumoniae serotype 4 (strain ATCC BAA-334 / TIGR4)</name>
    <dbReference type="NCBI Taxonomy" id="170187"/>
    <lineage>
        <taxon>Bacteria</taxon>
        <taxon>Bacillati</taxon>
        <taxon>Bacillota</taxon>
        <taxon>Bacilli</taxon>
        <taxon>Lactobacillales</taxon>
        <taxon>Streptococcaceae</taxon>
        <taxon>Streptococcus</taxon>
    </lineage>
</organism>
<accession>Q97Q31</accession>
<sequence>MKKRKKLALSLIAFWLTACLVGCASWIDRGESITAVGSTALQPLVEVAADEFGTIHVGKTVNVQGGGSGTGLSQVQSGAVDIGNSDVFAEEKDGIDASALVDHKVAVAGLALIVNKEVDVDNLTTEQLRQIFIGEVTNWKEVGGKDLPISVINRAAGSGSRATFDTVIMEGQSAMQSQEQDSNGAVKSIVSKSPGAISYLSLTYIDDSVKSMKLNGYDLSPENISSNNWPLWSYEHMYTLGQPNELAAEFLNFVLSDETQEGIVKGLKYIPIKEMKVEKDAAGTVTVLEGRQ</sequence>
<dbReference type="EMBL" id="AE005672">
    <property type="protein sequence ID" value="AAK75498.1"/>
    <property type="molecule type" value="Genomic_DNA"/>
</dbReference>
<dbReference type="PIR" id="A95163">
    <property type="entry name" value="A95163"/>
</dbReference>
<dbReference type="PDB" id="4LAT">
    <property type="method" value="X-ray"/>
    <property type="resolution" value="1.88 A"/>
    <property type="chains" value="A=28-292"/>
</dbReference>
<dbReference type="PDBsum" id="4LAT"/>
<dbReference type="SMR" id="Q97Q31"/>
<dbReference type="PaxDb" id="170187-SP_1400"/>
<dbReference type="EnsemblBacteria" id="AAK75498">
    <property type="protein sequence ID" value="AAK75498"/>
    <property type="gene ID" value="SP_1400"/>
</dbReference>
<dbReference type="KEGG" id="spn:SP_1400"/>
<dbReference type="eggNOG" id="COG0226">
    <property type="taxonomic scope" value="Bacteria"/>
</dbReference>
<dbReference type="PhylomeDB" id="Q97Q31"/>
<dbReference type="BioCyc" id="SPNE170187:G1FZB-1409-MONOMER"/>
<dbReference type="EvolutionaryTrace" id="Q97Q31"/>
<dbReference type="Proteomes" id="UP000000585">
    <property type="component" value="Chromosome"/>
</dbReference>
<dbReference type="GO" id="GO:0005886">
    <property type="term" value="C:plasma membrane"/>
    <property type="evidence" value="ECO:0007669"/>
    <property type="project" value="UniProtKB-SubCell"/>
</dbReference>
<dbReference type="GO" id="GO:0042301">
    <property type="term" value="F:phosphate ion binding"/>
    <property type="evidence" value="ECO:0007669"/>
    <property type="project" value="InterPro"/>
</dbReference>
<dbReference type="GO" id="GO:0006817">
    <property type="term" value="P:phosphate ion transport"/>
    <property type="evidence" value="ECO:0007669"/>
    <property type="project" value="UniProtKB-KW"/>
</dbReference>
<dbReference type="CDD" id="cd13653">
    <property type="entry name" value="PBP2_phosphate_like_1"/>
    <property type="match status" value="1"/>
</dbReference>
<dbReference type="FunFam" id="3.40.190.10:FF:000107">
    <property type="entry name" value="Phosphate ABC transporter, phosphate-binding protein"/>
    <property type="match status" value="1"/>
</dbReference>
<dbReference type="Gene3D" id="3.40.190.10">
    <property type="entry name" value="Periplasmic binding protein-like II"/>
    <property type="match status" value="2"/>
</dbReference>
<dbReference type="InterPro" id="IPR024370">
    <property type="entry name" value="PBP_domain"/>
</dbReference>
<dbReference type="InterPro" id="IPR011862">
    <property type="entry name" value="Phos-bd"/>
</dbReference>
<dbReference type="InterPro" id="IPR050811">
    <property type="entry name" value="Phosphate_ABC_transporter"/>
</dbReference>
<dbReference type="NCBIfam" id="TIGR02136">
    <property type="entry name" value="ptsS_2"/>
    <property type="match status" value="1"/>
</dbReference>
<dbReference type="PANTHER" id="PTHR30570">
    <property type="entry name" value="PERIPLASMIC PHOSPHATE BINDING COMPONENT OF PHOSPHATE ABC TRANSPORTER"/>
    <property type="match status" value="1"/>
</dbReference>
<dbReference type="PANTHER" id="PTHR30570:SF4">
    <property type="entry name" value="PHOSPHATE-BINDING PROTEIN PSTS 1"/>
    <property type="match status" value="1"/>
</dbReference>
<dbReference type="Pfam" id="PF12849">
    <property type="entry name" value="PBP_like_2"/>
    <property type="match status" value="1"/>
</dbReference>
<dbReference type="SUPFAM" id="SSF53850">
    <property type="entry name" value="Periplasmic binding protein-like II"/>
    <property type="match status" value="1"/>
</dbReference>
<dbReference type="PROSITE" id="PS51257">
    <property type="entry name" value="PROKAR_LIPOPROTEIN"/>
    <property type="match status" value="1"/>
</dbReference>
<feature type="signal peptide" evidence="2">
    <location>
        <begin position="1"/>
        <end position="18"/>
    </location>
</feature>
<feature type="chain" id="PRO_0000281670" description="Phosphate-binding protein PstS 1">
    <location>
        <begin position="19"/>
        <end position="292"/>
    </location>
</feature>
<feature type="lipid moiety-binding region" description="N-palmitoyl cysteine" evidence="2">
    <location>
        <position position="19"/>
    </location>
</feature>
<feature type="lipid moiety-binding region" description="S-diacylglycerol cysteine" evidence="2">
    <location>
        <position position="19"/>
    </location>
</feature>
<feature type="strand" evidence="4">
    <location>
        <begin position="32"/>
        <end position="37"/>
    </location>
</feature>
<feature type="turn" evidence="4">
    <location>
        <begin position="39"/>
        <end position="41"/>
    </location>
</feature>
<feature type="helix" evidence="4">
    <location>
        <begin position="42"/>
        <end position="55"/>
    </location>
</feature>
<feature type="strand" evidence="4">
    <location>
        <begin position="60"/>
        <end position="66"/>
    </location>
</feature>
<feature type="helix" evidence="4">
    <location>
        <begin position="68"/>
        <end position="76"/>
    </location>
</feature>
<feature type="strand" evidence="4">
    <location>
        <begin position="81"/>
        <end position="87"/>
    </location>
</feature>
<feature type="helix" evidence="4">
    <location>
        <begin position="89"/>
        <end position="91"/>
    </location>
</feature>
<feature type="helix" evidence="4">
    <location>
        <begin position="97"/>
        <end position="99"/>
    </location>
</feature>
<feature type="strand" evidence="4">
    <location>
        <begin position="100"/>
        <end position="114"/>
    </location>
</feature>
<feature type="helix" evidence="4">
    <location>
        <begin position="125"/>
        <end position="132"/>
    </location>
</feature>
<feature type="helix" evidence="4">
    <location>
        <begin position="139"/>
        <end position="142"/>
    </location>
</feature>
<feature type="strand" evidence="4">
    <location>
        <begin position="150"/>
        <end position="154"/>
    </location>
</feature>
<feature type="helix" evidence="4">
    <location>
        <begin position="159"/>
        <end position="168"/>
    </location>
</feature>
<feature type="turn" evidence="4">
    <location>
        <begin position="169"/>
        <end position="171"/>
    </location>
</feature>
<feature type="strand" evidence="4">
    <location>
        <begin position="178"/>
        <end position="182"/>
    </location>
</feature>
<feature type="helix" evidence="4">
    <location>
        <begin position="183"/>
        <end position="192"/>
    </location>
</feature>
<feature type="strand" evidence="4">
    <location>
        <begin position="196"/>
        <end position="201"/>
    </location>
</feature>
<feature type="helix" evidence="4">
    <location>
        <begin position="202"/>
        <end position="204"/>
    </location>
</feature>
<feature type="strand" evidence="4">
    <location>
        <begin position="209"/>
        <end position="211"/>
    </location>
</feature>
<feature type="helix" evidence="4">
    <location>
        <begin position="221"/>
        <end position="225"/>
    </location>
</feature>
<feature type="strand" evidence="4">
    <location>
        <begin position="232"/>
        <end position="242"/>
    </location>
</feature>
<feature type="helix" evidence="4">
    <location>
        <begin position="245"/>
        <end position="255"/>
    </location>
</feature>
<feature type="helix" evidence="4">
    <location>
        <begin position="257"/>
        <end position="261"/>
    </location>
</feature>
<feature type="helix" evidence="4">
    <location>
        <begin position="263"/>
        <end position="266"/>
    </location>
</feature>
<feature type="helix" evidence="4">
    <location>
        <begin position="272"/>
        <end position="274"/>
    </location>
</feature>
<feature type="strand" evidence="4">
    <location>
        <begin position="276"/>
        <end position="279"/>
    </location>
</feature>
<feature type="strand" evidence="4">
    <location>
        <begin position="285"/>
        <end position="287"/>
    </location>
</feature>
<name>PSTS1_STRPN</name>
<proteinExistence type="evidence at protein level"/>
<comment type="function">
    <text evidence="1">Part of the ABC transporter complex PstSACB involved in phosphate import.</text>
</comment>
<comment type="subunit">
    <text evidence="3">The complex is composed of two ATP-binding proteins (PstB), two transmembrane proteins (PstC and PstA) and a solute-binding protein (PstS).</text>
</comment>
<comment type="subcellular location">
    <subcellularLocation>
        <location evidence="3">Cell membrane</location>
        <topology evidence="3">Lipid-anchor</topology>
    </subcellularLocation>
</comment>
<comment type="similarity">
    <text evidence="3">Belongs to the PstS family.</text>
</comment>
<evidence type="ECO:0000250" key="1"/>
<evidence type="ECO:0000255" key="2">
    <source>
        <dbReference type="PROSITE-ProRule" id="PRU00303"/>
    </source>
</evidence>
<evidence type="ECO:0000305" key="3"/>
<evidence type="ECO:0007829" key="4">
    <source>
        <dbReference type="PDB" id="4LAT"/>
    </source>
</evidence>
<gene>
    <name type="primary">pstS1</name>
    <name type="ordered locus">SP_1400</name>
</gene>
<protein>
    <recommendedName>
        <fullName>Phosphate-binding protein PstS 1</fullName>
        <shortName>PBP 1</shortName>
    </recommendedName>
</protein>
<keyword id="KW-0002">3D-structure</keyword>
<keyword id="KW-1003">Cell membrane</keyword>
<keyword id="KW-0449">Lipoprotein</keyword>
<keyword id="KW-0472">Membrane</keyword>
<keyword id="KW-0564">Palmitate</keyword>
<keyword id="KW-0592">Phosphate transport</keyword>
<keyword id="KW-1185">Reference proteome</keyword>
<keyword id="KW-0732">Signal</keyword>
<keyword id="KW-0813">Transport</keyword>